<reference key="1">
    <citation type="journal article" date="2003" name="Proc. Natl. Acad. Sci. U.S.A.">
        <title>Complete genome sequence and analysis of Wolinella succinogenes.</title>
        <authorList>
            <person name="Baar C."/>
            <person name="Eppinger M."/>
            <person name="Raddatz G."/>
            <person name="Simon J."/>
            <person name="Lanz C."/>
            <person name="Klimmek O."/>
            <person name="Nandakumar R."/>
            <person name="Gross R."/>
            <person name="Rosinus A."/>
            <person name="Keller H."/>
            <person name="Jagtap P."/>
            <person name="Linke B."/>
            <person name="Meyer F."/>
            <person name="Lederer H."/>
            <person name="Schuster S.C."/>
        </authorList>
    </citation>
    <scope>NUCLEOTIDE SEQUENCE [LARGE SCALE GENOMIC DNA]</scope>
    <source>
        <strain>ATCC 29543 / DSM 1740 / CCUG 13145 / JCM 31913 / LMG 7466 / NCTC 11488 / FDC 602W</strain>
    </source>
</reference>
<evidence type="ECO:0000255" key="1">
    <source>
        <dbReference type="HAMAP-Rule" id="MF_00076"/>
    </source>
</evidence>
<gene>
    <name evidence="1" type="primary">hisB</name>
    <name type="ordered locus">WS2070</name>
</gene>
<feature type="chain" id="PRO_0000158184" description="Imidazoleglycerol-phosphate dehydratase">
    <location>
        <begin position="1"/>
        <end position="190"/>
    </location>
</feature>
<name>HIS7_WOLSU</name>
<accession>Q7M7V2</accession>
<comment type="catalytic activity">
    <reaction evidence="1">
        <text>D-erythro-1-(imidazol-4-yl)glycerol 3-phosphate = 3-(imidazol-4-yl)-2-oxopropyl phosphate + H2O</text>
        <dbReference type="Rhea" id="RHEA:11040"/>
        <dbReference type="ChEBI" id="CHEBI:15377"/>
        <dbReference type="ChEBI" id="CHEBI:57766"/>
        <dbReference type="ChEBI" id="CHEBI:58278"/>
        <dbReference type="EC" id="4.2.1.19"/>
    </reaction>
</comment>
<comment type="pathway">
    <text evidence="1">Amino-acid biosynthesis; L-histidine biosynthesis; L-histidine from 5-phospho-alpha-D-ribose 1-diphosphate: step 6/9.</text>
</comment>
<comment type="subcellular location">
    <subcellularLocation>
        <location evidence="1">Cytoplasm</location>
    </subcellularLocation>
</comment>
<comment type="similarity">
    <text evidence="1">Belongs to the imidazoleglycerol-phosphate dehydratase family.</text>
</comment>
<proteinExistence type="inferred from homology"/>
<sequence length="190" mass="20936">MREITRTTKETNIKASLELYGSGVAKIETGIGFFDHMLESLAKHALWDLEISCEGDLQVDAHHSVEDCGIVLGLLLRESLYPAQGIERFGNASVVMDESCVECDLDVSNRPFLVFDMTIEGAVGEFDAELAEEFFRALAFNAGLSLHIVQKRGKNRHHLIEAAFKALAVAMRRACTQNPRIGTPSTKGLL</sequence>
<protein>
    <recommendedName>
        <fullName evidence="1">Imidazoleglycerol-phosphate dehydratase</fullName>
        <shortName evidence="1">IGPD</shortName>
        <ecNumber evidence="1">4.2.1.19</ecNumber>
    </recommendedName>
</protein>
<keyword id="KW-0028">Amino-acid biosynthesis</keyword>
<keyword id="KW-0963">Cytoplasm</keyword>
<keyword id="KW-0368">Histidine biosynthesis</keyword>
<keyword id="KW-0456">Lyase</keyword>
<keyword id="KW-1185">Reference proteome</keyword>
<organism>
    <name type="scientific">Wolinella succinogenes (strain ATCC 29543 / DSM 1740 / CCUG 13145 / JCM 31913 / LMG 7466 / NCTC 11488 / FDC 602W)</name>
    <name type="common">Vibrio succinogenes</name>
    <dbReference type="NCBI Taxonomy" id="273121"/>
    <lineage>
        <taxon>Bacteria</taxon>
        <taxon>Pseudomonadati</taxon>
        <taxon>Campylobacterota</taxon>
        <taxon>Epsilonproteobacteria</taxon>
        <taxon>Campylobacterales</taxon>
        <taxon>Helicobacteraceae</taxon>
        <taxon>Wolinella</taxon>
    </lineage>
</organism>
<dbReference type="EC" id="4.2.1.19" evidence="1"/>
<dbReference type="EMBL" id="BX571662">
    <property type="protein sequence ID" value="CAE11069.1"/>
    <property type="molecule type" value="Genomic_DNA"/>
</dbReference>
<dbReference type="RefSeq" id="WP_011139851.1">
    <property type="nucleotide sequence ID" value="NC_005090.1"/>
</dbReference>
<dbReference type="SMR" id="Q7M7V2"/>
<dbReference type="STRING" id="273121.WS2070"/>
<dbReference type="KEGG" id="wsu:WS2070"/>
<dbReference type="eggNOG" id="COG0131">
    <property type="taxonomic scope" value="Bacteria"/>
</dbReference>
<dbReference type="HOGENOM" id="CLU_044308_3_0_7"/>
<dbReference type="UniPathway" id="UPA00031">
    <property type="reaction ID" value="UER00011"/>
</dbReference>
<dbReference type="Proteomes" id="UP000000422">
    <property type="component" value="Chromosome"/>
</dbReference>
<dbReference type="GO" id="GO:0005737">
    <property type="term" value="C:cytoplasm"/>
    <property type="evidence" value="ECO:0007669"/>
    <property type="project" value="UniProtKB-SubCell"/>
</dbReference>
<dbReference type="GO" id="GO:0004424">
    <property type="term" value="F:imidazoleglycerol-phosphate dehydratase activity"/>
    <property type="evidence" value="ECO:0007669"/>
    <property type="project" value="UniProtKB-UniRule"/>
</dbReference>
<dbReference type="GO" id="GO:0000105">
    <property type="term" value="P:L-histidine biosynthetic process"/>
    <property type="evidence" value="ECO:0007669"/>
    <property type="project" value="UniProtKB-UniRule"/>
</dbReference>
<dbReference type="CDD" id="cd07914">
    <property type="entry name" value="IGPD"/>
    <property type="match status" value="1"/>
</dbReference>
<dbReference type="FunFam" id="3.30.230.40:FF:000001">
    <property type="entry name" value="Imidazoleglycerol-phosphate dehydratase HisB"/>
    <property type="match status" value="1"/>
</dbReference>
<dbReference type="FunFam" id="3.30.230.40:FF:000003">
    <property type="entry name" value="Imidazoleglycerol-phosphate dehydratase HisB"/>
    <property type="match status" value="1"/>
</dbReference>
<dbReference type="Gene3D" id="3.30.230.40">
    <property type="entry name" value="Imidazole glycerol phosphate dehydratase, domain 1"/>
    <property type="match status" value="2"/>
</dbReference>
<dbReference type="HAMAP" id="MF_00076">
    <property type="entry name" value="HisB"/>
    <property type="match status" value="1"/>
</dbReference>
<dbReference type="InterPro" id="IPR038494">
    <property type="entry name" value="IGPD_sf"/>
</dbReference>
<dbReference type="InterPro" id="IPR000807">
    <property type="entry name" value="ImidazoleglycerolP_deHydtase"/>
</dbReference>
<dbReference type="InterPro" id="IPR020565">
    <property type="entry name" value="ImidazoleglycerP_deHydtase_CS"/>
</dbReference>
<dbReference type="InterPro" id="IPR020568">
    <property type="entry name" value="Ribosomal_Su5_D2-typ_SF"/>
</dbReference>
<dbReference type="NCBIfam" id="NF002111">
    <property type="entry name" value="PRK00951.2-1"/>
    <property type="match status" value="1"/>
</dbReference>
<dbReference type="NCBIfam" id="NF002114">
    <property type="entry name" value="PRK00951.2-4"/>
    <property type="match status" value="1"/>
</dbReference>
<dbReference type="PANTHER" id="PTHR23133:SF2">
    <property type="entry name" value="IMIDAZOLEGLYCEROL-PHOSPHATE DEHYDRATASE"/>
    <property type="match status" value="1"/>
</dbReference>
<dbReference type="PANTHER" id="PTHR23133">
    <property type="entry name" value="IMIDAZOLEGLYCEROL-PHOSPHATE DEHYDRATASE HIS7"/>
    <property type="match status" value="1"/>
</dbReference>
<dbReference type="Pfam" id="PF00475">
    <property type="entry name" value="IGPD"/>
    <property type="match status" value="1"/>
</dbReference>
<dbReference type="SUPFAM" id="SSF54211">
    <property type="entry name" value="Ribosomal protein S5 domain 2-like"/>
    <property type="match status" value="2"/>
</dbReference>
<dbReference type="PROSITE" id="PS00954">
    <property type="entry name" value="IGP_DEHYDRATASE_1"/>
    <property type="match status" value="1"/>
</dbReference>
<dbReference type="PROSITE" id="PS00955">
    <property type="entry name" value="IGP_DEHYDRATASE_2"/>
    <property type="match status" value="1"/>
</dbReference>